<gene>
    <name evidence="1" type="primary">rplM</name>
    <name type="ordered locus">BMASAVP1_A0253</name>
</gene>
<name>RL13_BURMS</name>
<protein>
    <recommendedName>
        <fullName evidence="1">Large ribosomal subunit protein uL13</fullName>
    </recommendedName>
    <alternativeName>
        <fullName evidence="2">50S ribosomal protein L13</fullName>
    </alternativeName>
</protein>
<evidence type="ECO:0000255" key="1">
    <source>
        <dbReference type="HAMAP-Rule" id="MF_01366"/>
    </source>
</evidence>
<evidence type="ECO:0000305" key="2"/>
<feature type="chain" id="PRO_1000055357" description="Large ribosomal subunit protein uL13">
    <location>
        <begin position="1"/>
        <end position="142"/>
    </location>
</feature>
<sequence>MKTFSAKAHEVTREWYVIDATDKVLGRVASEVARRLRGKHKPEFTPHVDTGDFIIVINASKLKVTGNKTLDKKYYRHSGYPGGIYETTFGKMQERFPGRALEKAVKGMLPKCPLGYAMIKKLKVYAEATHPHSAQQPKALEI</sequence>
<proteinExistence type="inferred from homology"/>
<accession>A1V051</accession>
<organism>
    <name type="scientific">Burkholderia mallei (strain SAVP1)</name>
    <dbReference type="NCBI Taxonomy" id="320388"/>
    <lineage>
        <taxon>Bacteria</taxon>
        <taxon>Pseudomonadati</taxon>
        <taxon>Pseudomonadota</taxon>
        <taxon>Betaproteobacteria</taxon>
        <taxon>Burkholderiales</taxon>
        <taxon>Burkholderiaceae</taxon>
        <taxon>Burkholderia</taxon>
        <taxon>pseudomallei group</taxon>
    </lineage>
</organism>
<comment type="function">
    <text evidence="1">This protein is one of the early assembly proteins of the 50S ribosomal subunit, although it is not seen to bind rRNA by itself. It is important during the early stages of 50S assembly.</text>
</comment>
<comment type="subunit">
    <text evidence="1">Part of the 50S ribosomal subunit.</text>
</comment>
<comment type="similarity">
    <text evidence="1">Belongs to the universal ribosomal protein uL13 family.</text>
</comment>
<dbReference type="EMBL" id="CP000526">
    <property type="protein sequence ID" value="ABM52210.1"/>
    <property type="molecule type" value="Genomic_DNA"/>
</dbReference>
<dbReference type="RefSeq" id="WP_004194372.1">
    <property type="nucleotide sequence ID" value="NC_008785.1"/>
</dbReference>
<dbReference type="SMR" id="A1V051"/>
<dbReference type="GeneID" id="92980034"/>
<dbReference type="KEGG" id="bmv:BMASAVP1_A0253"/>
<dbReference type="HOGENOM" id="CLU_082184_2_2_4"/>
<dbReference type="GO" id="GO:0022625">
    <property type="term" value="C:cytosolic large ribosomal subunit"/>
    <property type="evidence" value="ECO:0007669"/>
    <property type="project" value="TreeGrafter"/>
</dbReference>
<dbReference type="GO" id="GO:0003729">
    <property type="term" value="F:mRNA binding"/>
    <property type="evidence" value="ECO:0007669"/>
    <property type="project" value="TreeGrafter"/>
</dbReference>
<dbReference type="GO" id="GO:0003735">
    <property type="term" value="F:structural constituent of ribosome"/>
    <property type="evidence" value="ECO:0007669"/>
    <property type="project" value="InterPro"/>
</dbReference>
<dbReference type="GO" id="GO:0017148">
    <property type="term" value="P:negative regulation of translation"/>
    <property type="evidence" value="ECO:0007669"/>
    <property type="project" value="TreeGrafter"/>
</dbReference>
<dbReference type="GO" id="GO:0006412">
    <property type="term" value="P:translation"/>
    <property type="evidence" value="ECO:0007669"/>
    <property type="project" value="UniProtKB-UniRule"/>
</dbReference>
<dbReference type="CDD" id="cd00392">
    <property type="entry name" value="Ribosomal_L13"/>
    <property type="match status" value="1"/>
</dbReference>
<dbReference type="FunFam" id="3.90.1180.10:FF:000001">
    <property type="entry name" value="50S ribosomal protein L13"/>
    <property type="match status" value="1"/>
</dbReference>
<dbReference type="Gene3D" id="3.90.1180.10">
    <property type="entry name" value="Ribosomal protein L13"/>
    <property type="match status" value="1"/>
</dbReference>
<dbReference type="HAMAP" id="MF_01366">
    <property type="entry name" value="Ribosomal_uL13"/>
    <property type="match status" value="1"/>
</dbReference>
<dbReference type="InterPro" id="IPR005822">
    <property type="entry name" value="Ribosomal_uL13"/>
</dbReference>
<dbReference type="InterPro" id="IPR005823">
    <property type="entry name" value="Ribosomal_uL13_bac-type"/>
</dbReference>
<dbReference type="InterPro" id="IPR036899">
    <property type="entry name" value="Ribosomal_uL13_sf"/>
</dbReference>
<dbReference type="NCBIfam" id="TIGR01066">
    <property type="entry name" value="rplM_bact"/>
    <property type="match status" value="1"/>
</dbReference>
<dbReference type="PANTHER" id="PTHR11545:SF2">
    <property type="entry name" value="LARGE RIBOSOMAL SUBUNIT PROTEIN UL13M"/>
    <property type="match status" value="1"/>
</dbReference>
<dbReference type="PANTHER" id="PTHR11545">
    <property type="entry name" value="RIBOSOMAL PROTEIN L13"/>
    <property type="match status" value="1"/>
</dbReference>
<dbReference type="Pfam" id="PF00572">
    <property type="entry name" value="Ribosomal_L13"/>
    <property type="match status" value="1"/>
</dbReference>
<dbReference type="PIRSF" id="PIRSF002181">
    <property type="entry name" value="Ribosomal_L13"/>
    <property type="match status" value="1"/>
</dbReference>
<dbReference type="SUPFAM" id="SSF52161">
    <property type="entry name" value="Ribosomal protein L13"/>
    <property type="match status" value="1"/>
</dbReference>
<keyword id="KW-0687">Ribonucleoprotein</keyword>
<keyword id="KW-0689">Ribosomal protein</keyword>
<reference key="1">
    <citation type="journal article" date="2010" name="Genome Biol. Evol.">
        <title>Continuing evolution of Burkholderia mallei through genome reduction and large-scale rearrangements.</title>
        <authorList>
            <person name="Losada L."/>
            <person name="Ronning C.M."/>
            <person name="DeShazer D."/>
            <person name="Woods D."/>
            <person name="Fedorova N."/>
            <person name="Kim H.S."/>
            <person name="Shabalina S.A."/>
            <person name="Pearson T.R."/>
            <person name="Brinkac L."/>
            <person name="Tan P."/>
            <person name="Nandi T."/>
            <person name="Crabtree J."/>
            <person name="Badger J."/>
            <person name="Beckstrom-Sternberg S."/>
            <person name="Saqib M."/>
            <person name="Schutzer S.E."/>
            <person name="Keim P."/>
            <person name="Nierman W.C."/>
        </authorList>
    </citation>
    <scope>NUCLEOTIDE SEQUENCE [LARGE SCALE GENOMIC DNA]</scope>
    <source>
        <strain>SAVP1</strain>
    </source>
</reference>